<dbReference type="EMBL" id="AK074401">
    <property type="protein sequence ID" value="BAB85070.1"/>
    <property type="status" value="ALT_FRAME"/>
    <property type="molecule type" value="mRNA"/>
</dbReference>
<dbReference type="EMBL" id="BC032219">
    <property type="protein sequence ID" value="AAH32219.2"/>
    <property type="molecule type" value="mRNA"/>
</dbReference>
<dbReference type="EMBL" id="BC035372">
    <property type="protein sequence ID" value="AAH35372.1"/>
    <property type="molecule type" value="mRNA"/>
</dbReference>
<dbReference type="EMBL" id="AL137556">
    <property type="protein sequence ID" value="CAB70810.2"/>
    <property type="molecule type" value="mRNA"/>
</dbReference>
<dbReference type="CCDS" id="CCDS32726.1">
    <molecule id="Q8IV36-1"/>
</dbReference>
<dbReference type="PIR" id="T46395">
    <property type="entry name" value="T46395"/>
</dbReference>
<dbReference type="RefSeq" id="NP_085133.1">
    <molecule id="Q8IV36-1"/>
    <property type="nucleotide sequence ID" value="NM_030630.3"/>
</dbReference>
<dbReference type="RefSeq" id="XP_005257283.1">
    <molecule id="Q8IV36-2"/>
    <property type="nucleotide sequence ID" value="XM_005257226.3"/>
</dbReference>
<dbReference type="RefSeq" id="XP_054171707.1">
    <molecule id="Q8IV36-2"/>
    <property type="nucleotide sequence ID" value="XM_054315732.1"/>
</dbReference>
<dbReference type="BioGRID" id="129720">
    <property type="interactions" value="23"/>
</dbReference>
<dbReference type="FunCoup" id="Q8IV36">
    <property type="interactions" value="731"/>
</dbReference>
<dbReference type="IntAct" id="Q8IV36">
    <property type="interactions" value="25"/>
</dbReference>
<dbReference type="MINT" id="Q8IV36"/>
<dbReference type="STRING" id="9606.ENSP00000413520"/>
<dbReference type="GlyGen" id="Q8IV36">
    <property type="glycosylation" value="5 sites, 1 O-linked glycan (3 sites)"/>
</dbReference>
<dbReference type="iPTMnet" id="Q8IV36"/>
<dbReference type="PhosphoSitePlus" id="Q8IV36"/>
<dbReference type="SwissPalm" id="Q8IV36"/>
<dbReference type="BioMuta" id="HID1"/>
<dbReference type="DMDM" id="68565199"/>
<dbReference type="jPOST" id="Q8IV36"/>
<dbReference type="MassIVE" id="Q8IV36"/>
<dbReference type="PaxDb" id="9606-ENSP00000413520"/>
<dbReference type="PeptideAtlas" id="Q8IV36"/>
<dbReference type="ProteomicsDB" id="70652">
    <molecule id="Q8IV36-1"/>
</dbReference>
<dbReference type="ProteomicsDB" id="70653">
    <molecule id="Q8IV36-2"/>
</dbReference>
<dbReference type="ProteomicsDB" id="70654">
    <molecule id="Q8IV36-3"/>
</dbReference>
<dbReference type="Pumba" id="Q8IV36"/>
<dbReference type="Antibodypedia" id="19485">
    <property type="antibodies" value="252 antibodies from 23 providers"/>
</dbReference>
<dbReference type="DNASU" id="283987"/>
<dbReference type="Ensembl" id="ENST00000425042.7">
    <molecule id="Q8IV36-1"/>
    <property type="protein sequence ID" value="ENSP00000413520.2"/>
    <property type="gene ID" value="ENSG00000167861.16"/>
</dbReference>
<dbReference type="GeneID" id="283987"/>
<dbReference type="KEGG" id="hsa:283987"/>
<dbReference type="MANE-Select" id="ENST00000425042.7">
    <property type="protein sequence ID" value="ENSP00000413520.2"/>
    <property type="RefSeq nucleotide sequence ID" value="NM_030630.3"/>
    <property type="RefSeq protein sequence ID" value="NP_085133.1"/>
</dbReference>
<dbReference type="UCSC" id="uc002jmj.5">
    <molecule id="Q8IV36-1"/>
    <property type="organism name" value="human"/>
</dbReference>
<dbReference type="AGR" id="HGNC:15736"/>
<dbReference type="CTD" id="283987"/>
<dbReference type="DisGeNET" id="283987"/>
<dbReference type="GeneCards" id="HID1"/>
<dbReference type="HGNC" id="HGNC:15736">
    <property type="gene designation" value="HID1"/>
</dbReference>
<dbReference type="HPA" id="ENSG00000167861">
    <property type="expression patterns" value="Tissue enhanced (brain, pancreas)"/>
</dbReference>
<dbReference type="MalaCards" id="HID1"/>
<dbReference type="MIM" id="605752">
    <property type="type" value="gene"/>
</dbReference>
<dbReference type="MIM" id="619983">
    <property type="type" value="phenotype"/>
</dbReference>
<dbReference type="neXtProt" id="NX_Q8IV36"/>
<dbReference type="OpenTargets" id="ENSG00000167861"/>
<dbReference type="PharmGKB" id="PA25583"/>
<dbReference type="VEuPathDB" id="HostDB:ENSG00000167861"/>
<dbReference type="eggNOG" id="KOG2226">
    <property type="taxonomic scope" value="Eukaryota"/>
</dbReference>
<dbReference type="GeneTree" id="ENSGT00390000003070"/>
<dbReference type="HOGENOM" id="CLU_007392_1_0_1"/>
<dbReference type="InParanoid" id="Q8IV36"/>
<dbReference type="OMA" id="IFEDDKW"/>
<dbReference type="OrthoDB" id="432953at2759"/>
<dbReference type="PAN-GO" id="Q8IV36">
    <property type="GO annotations" value="3 GO annotations based on evolutionary models"/>
</dbReference>
<dbReference type="PhylomeDB" id="Q8IV36"/>
<dbReference type="TreeFam" id="TF314291"/>
<dbReference type="PathwayCommons" id="Q8IV36"/>
<dbReference type="SignaLink" id="Q8IV36"/>
<dbReference type="BioGRID-ORCS" id="283987">
    <property type="hits" value="52 hits in 1148 CRISPR screens"/>
</dbReference>
<dbReference type="ChiTaRS" id="HID1">
    <property type="organism name" value="human"/>
</dbReference>
<dbReference type="GenomeRNAi" id="283987"/>
<dbReference type="Pharos" id="Q8IV36">
    <property type="development level" value="Tdark"/>
</dbReference>
<dbReference type="PRO" id="PR:Q8IV36"/>
<dbReference type="Proteomes" id="UP000005640">
    <property type="component" value="Chromosome 17"/>
</dbReference>
<dbReference type="RNAct" id="Q8IV36">
    <property type="molecule type" value="protein"/>
</dbReference>
<dbReference type="Bgee" id="ENSG00000167861">
    <property type="expression patterns" value="Expressed in right hemisphere of cerebellum and 144 other cell types or tissues"/>
</dbReference>
<dbReference type="ExpressionAtlas" id="Q8IV36">
    <property type="expression patterns" value="baseline and differential"/>
</dbReference>
<dbReference type="GO" id="GO:0005737">
    <property type="term" value="C:cytoplasm"/>
    <property type="evidence" value="ECO:0000314"/>
    <property type="project" value="UniProtKB"/>
</dbReference>
<dbReference type="GO" id="GO:0005881">
    <property type="term" value="C:cytoplasmic microtubule"/>
    <property type="evidence" value="ECO:0000314"/>
    <property type="project" value="UniProtKB"/>
</dbReference>
<dbReference type="GO" id="GO:0098548">
    <property type="term" value="C:cytoplasmic side of Golgi membrane"/>
    <property type="evidence" value="ECO:0000314"/>
    <property type="project" value="UniProtKB"/>
</dbReference>
<dbReference type="GO" id="GO:0005829">
    <property type="term" value="C:cytosol"/>
    <property type="evidence" value="ECO:0000314"/>
    <property type="project" value="HPA"/>
</dbReference>
<dbReference type="GO" id="GO:0070062">
    <property type="term" value="C:extracellular exosome"/>
    <property type="evidence" value="ECO:0007005"/>
    <property type="project" value="UniProtKB"/>
</dbReference>
<dbReference type="GO" id="GO:0005794">
    <property type="term" value="C:Golgi apparatus"/>
    <property type="evidence" value="ECO:0000314"/>
    <property type="project" value="HPA"/>
</dbReference>
<dbReference type="GO" id="GO:0005797">
    <property type="term" value="C:Golgi medial cisterna"/>
    <property type="evidence" value="ECO:0000314"/>
    <property type="project" value="UniProtKB"/>
</dbReference>
<dbReference type="GO" id="GO:0000138">
    <property type="term" value="C:Golgi trans cisterna"/>
    <property type="evidence" value="ECO:0000314"/>
    <property type="project" value="UniProtKB"/>
</dbReference>
<dbReference type="GO" id="GO:0016020">
    <property type="term" value="C:membrane"/>
    <property type="evidence" value="ECO:0000318"/>
    <property type="project" value="GO_Central"/>
</dbReference>
<dbReference type="GO" id="GO:0030070">
    <property type="term" value="P:insulin processing"/>
    <property type="evidence" value="ECO:0007669"/>
    <property type="project" value="Ensembl"/>
</dbReference>
<dbReference type="GO" id="GO:0009749">
    <property type="term" value="P:response to glucose"/>
    <property type="evidence" value="ECO:0007669"/>
    <property type="project" value="Ensembl"/>
</dbReference>
<dbReference type="GO" id="GO:0061792">
    <property type="term" value="P:secretory granule maturation"/>
    <property type="evidence" value="ECO:0007669"/>
    <property type="project" value="Ensembl"/>
</dbReference>
<dbReference type="GO" id="GO:0042144">
    <property type="term" value="P:vacuole fusion, non-autophagic"/>
    <property type="evidence" value="ECO:0007669"/>
    <property type="project" value="Ensembl"/>
</dbReference>
<dbReference type="InterPro" id="IPR026705">
    <property type="entry name" value="Hid-1/Ecm30"/>
</dbReference>
<dbReference type="PANTHER" id="PTHR21575">
    <property type="entry name" value="PROTEIN HID1"/>
    <property type="match status" value="1"/>
</dbReference>
<dbReference type="PANTHER" id="PTHR21575:SF12">
    <property type="entry name" value="PROTEIN HID1"/>
    <property type="match status" value="1"/>
</dbReference>
<dbReference type="Pfam" id="PF12722">
    <property type="entry name" value="Hid1"/>
    <property type="match status" value="1"/>
</dbReference>
<evidence type="ECO:0000250" key="1">
    <source>
        <dbReference type="UniProtKB" id="Q8R1F6"/>
    </source>
</evidence>
<evidence type="ECO:0000256" key="2">
    <source>
        <dbReference type="SAM" id="MobiDB-lite"/>
    </source>
</evidence>
<evidence type="ECO:0000269" key="3">
    <source>
    </source>
</evidence>
<evidence type="ECO:0000269" key="4">
    <source>
    </source>
</evidence>
<evidence type="ECO:0000269" key="5">
    <source>
    </source>
</evidence>
<evidence type="ECO:0000269" key="6">
    <source>
    </source>
</evidence>
<evidence type="ECO:0000303" key="7">
    <source>
    </source>
</evidence>
<evidence type="ECO:0000303" key="8">
    <source>
    </source>
</evidence>
<evidence type="ECO:0000305" key="9"/>
<evidence type="ECO:0007744" key="10">
    <source>
    </source>
</evidence>
<feature type="initiator methionine" description="Removed">
    <location>
        <position position="1"/>
    </location>
</feature>
<feature type="chain" id="PRO_0000079296" description="Protein HID1">
    <location>
        <begin position="2"/>
        <end position="788"/>
    </location>
</feature>
<feature type="region of interest" description="Disordered" evidence="2">
    <location>
        <begin position="297"/>
        <end position="316"/>
    </location>
</feature>
<feature type="region of interest" description="Disordered" evidence="2">
    <location>
        <begin position="571"/>
        <end position="681"/>
    </location>
</feature>
<feature type="compositionally biased region" description="Polar residues" evidence="2">
    <location>
        <begin position="590"/>
        <end position="600"/>
    </location>
</feature>
<feature type="compositionally biased region" description="Polar residues" evidence="2">
    <location>
        <begin position="669"/>
        <end position="680"/>
    </location>
</feature>
<feature type="modified residue" description="Phosphoserine" evidence="10">
    <location>
        <position position="653"/>
    </location>
</feature>
<feature type="modified residue" description="Phosphoserine" evidence="1">
    <location>
        <position position="670"/>
    </location>
</feature>
<feature type="lipid moiety-binding region" description="N-myristoyl glycine" evidence="4 5">
    <location>
        <position position="2"/>
    </location>
</feature>
<feature type="splice variant" id="VSP_014472" description="In isoform 3." evidence="7">
    <location>
        <begin position="30"/>
        <end position="257"/>
    </location>
</feature>
<feature type="splice variant" id="VSP_014473" description="In isoform 2." evidence="8">
    <location>
        <position position="130"/>
    </location>
</feature>
<feature type="sequence variant" id="VAR_087635" description="In DEE105." evidence="6">
    <location>
        <begin position="130"/>
        <end position="788"/>
    </location>
</feature>
<feature type="sequence variant" id="VAR_087636" description="In DEE105; uncertain significance; dbSNP:rs2039494684." evidence="6">
    <original>G</original>
    <variation>D</variation>
    <location>
        <position position="187"/>
    </location>
</feature>
<feature type="sequence variant" id="VAR_087637" description="In DEE105; uncertain significance; patient fibroblasts show normal expression and localization; dbSNP:rs994473385." evidence="6">
    <original>R</original>
    <variation>W</variation>
    <location>
        <position position="433"/>
    </location>
</feature>
<feature type="sequence variant" id="VAR_087638" description="In DEE105; uncertain significance." evidence="6">
    <original>L</original>
    <variation>P</variation>
    <location>
        <position position="533"/>
    </location>
</feature>
<feature type="sequence conflict" description="In Ref. 4; CAB70810." evidence="9" ref="4">
    <original>P</original>
    <variation>L</variation>
    <location>
        <position position="352"/>
    </location>
</feature>
<accession>Q8IV36</accession>
<accession>Q8N5L6</accession>
<accession>Q8TE83</accession>
<accession>Q9NT34</accession>
<proteinExistence type="evidence at protein level"/>
<reference key="1">
    <citation type="journal article" date="2001" name="J. Hum. Genet.">
        <title>Identification of DMC1, a novel gene in the TOC region on 17q25.1 that shows loss of expression in multiple human cancers.</title>
        <authorList>
            <person name="Harada H."/>
            <person name="Nagai H."/>
            <person name="Tsuneizumi M."/>
            <person name="Mikami I."/>
            <person name="Sugano S."/>
            <person name="Emi M."/>
        </authorList>
    </citation>
    <scope>NUCLEOTIDE SEQUENCE [MRNA] (ISOFORM 1)</scope>
    <scope>FUNCTION</scope>
    <scope>TISSUE SPECIFICITY</scope>
</reference>
<reference key="2">
    <citation type="journal article" date="2004" name="Nat. Genet.">
        <title>Complete sequencing and characterization of 21,243 full-length human cDNAs.</title>
        <authorList>
            <person name="Ota T."/>
            <person name="Suzuki Y."/>
            <person name="Nishikawa T."/>
            <person name="Otsuki T."/>
            <person name="Sugiyama T."/>
            <person name="Irie R."/>
            <person name="Wakamatsu A."/>
            <person name="Hayashi K."/>
            <person name="Sato H."/>
            <person name="Nagai K."/>
            <person name="Kimura K."/>
            <person name="Makita H."/>
            <person name="Sekine M."/>
            <person name="Obayashi M."/>
            <person name="Nishi T."/>
            <person name="Shibahara T."/>
            <person name="Tanaka T."/>
            <person name="Ishii S."/>
            <person name="Yamamoto J."/>
            <person name="Saito K."/>
            <person name="Kawai Y."/>
            <person name="Isono Y."/>
            <person name="Nakamura Y."/>
            <person name="Nagahari K."/>
            <person name="Murakami K."/>
            <person name="Yasuda T."/>
            <person name="Iwayanagi T."/>
            <person name="Wagatsuma M."/>
            <person name="Shiratori A."/>
            <person name="Sudo H."/>
            <person name="Hosoiri T."/>
            <person name="Kaku Y."/>
            <person name="Kodaira H."/>
            <person name="Kondo H."/>
            <person name="Sugawara M."/>
            <person name="Takahashi M."/>
            <person name="Kanda K."/>
            <person name="Yokoi T."/>
            <person name="Furuya T."/>
            <person name="Kikkawa E."/>
            <person name="Omura Y."/>
            <person name="Abe K."/>
            <person name="Kamihara K."/>
            <person name="Katsuta N."/>
            <person name="Sato K."/>
            <person name="Tanikawa M."/>
            <person name="Yamazaki M."/>
            <person name="Ninomiya K."/>
            <person name="Ishibashi T."/>
            <person name="Yamashita H."/>
            <person name="Murakawa K."/>
            <person name="Fujimori K."/>
            <person name="Tanai H."/>
            <person name="Kimata M."/>
            <person name="Watanabe M."/>
            <person name="Hiraoka S."/>
            <person name="Chiba Y."/>
            <person name="Ishida S."/>
            <person name="Ono Y."/>
            <person name="Takiguchi S."/>
            <person name="Watanabe S."/>
            <person name="Yosida M."/>
            <person name="Hotuta T."/>
            <person name="Kusano J."/>
            <person name="Kanehori K."/>
            <person name="Takahashi-Fujii A."/>
            <person name="Hara H."/>
            <person name="Tanase T.-O."/>
            <person name="Nomura Y."/>
            <person name="Togiya S."/>
            <person name="Komai F."/>
            <person name="Hara R."/>
            <person name="Takeuchi K."/>
            <person name="Arita M."/>
            <person name="Imose N."/>
            <person name="Musashino K."/>
            <person name="Yuuki H."/>
            <person name="Oshima A."/>
            <person name="Sasaki N."/>
            <person name="Aotsuka S."/>
            <person name="Yoshikawa Y."/>
            <person name="Matsunawa H."/>
            <person name="Ichihara T."/>
            <person name="Shiohata N."/>
            <person name="Sano S."/>
            <person name="Moriya S."/>
            <person name="Momiyama H."/>
            <person name="Satoh N."/>
            <person name="Takami S."/>
            <person name="Terashima Y."/>
            <person name="Suzuki O."/>
            <person name="Nakagawa S."/>
            <person name="Senoh A."/>
            <person name="Mizoguchi H."/>
            <person name="Goto Y."/>
            <person name="Shimizu F."/>
            <person name="Wakebe H."/>
            <person name="Hishigaki H."/>
            <person name="Watanabe T."/>
            <person name="Sugiyama A."/>
            <person name="Takemoto M."/>
            <person name="Kawakami B."/>
            <person name="Yamazaki M."/>
            <person name="Watanabe K."/>
            <person name="Kumagai A."/>
            <person name="Itakura S."/>
            <person name="Fukuzumi Y."/>
            <person name="Fujimori Y."/>
            <person name="Komiyama M."/>
            <person name="Tashiro H."/>
            <person name="Tanigami A."/>
            <person name="Fujiwara T."/>
            <person name="Ono T."/>
            <person name="Yamada K."/>
            <person name="Fujii Y."/>
            <person name="Ozaki K."/>
            <person name="Hirao M."/>
            <person name="Ohmori Y."/>
            <person name="Kawabata A."/>
            <person name="Hikiji T."/>
            <person name="Kobatake N."/>
            <person name="Inagaki H."/>
            <person name="Ikema Y."/>
            <person name="Okamoto S."/>
            <person name="Okitani R."/>
            <person name="Kawakami T."/>
            <person name="Noguchi S."/>
            <person name="Itoh T."/>
            <person name="Shigeta K."/>
            <person name="Senba T."/>
            <person name="Matsumura K."/>
            <person name="Nakajima Y."/>
            <person name="Mizuno T."/>
            <person name="Morinaga M."/>
            <person name="Sasaki M."/>
            <person name="Togashi T."/>
            <person name="Oyama M."/>
            <person name="Hata H."/>
            <person name="Watanabe M."/>
            <person name="Komatsu T."/>
            <person name="Mizushima-Sugano J."/>
            <person name="Satoh T."/>
            <person name="Shirai Y."/>
            <person name="Takahashi Y."/>
            <person name="Nakagawa K."/>
            <person name="Okumura K."/>
            <person name="Nagase T."/>
            <person name="Nomura N."/>
            <person name="Kikuchi H."/>
            <person name="Masuho Y."/>
            <person name="Yamashita R."/>
            <person name="Nakai K."/>
            <person name="Yada T."/>
            <person name="Nakamura Y."/>
            <person name="Ohara O."/>
            <person name="Isogai T."/>
            <person name="Sugano S."/>
        </authorList>
    </citation>
    <scope>NUCLEOTIDE SEQUENCE [LARGE SCALE MRNA] (ISOFORM 1)</scope>
</reference>
<reference key="3">
    <citation type="journal article" date="2004" name="Genome Res.">
        <title>The status, quality, and expansion of the NIH full-length cDNA project: the Mammalian Gene Collection (MGC).</title>
        <authorList>
            <consortium name="The MGC Project Team"/>
        </authorList>
    </citation>
    <scope>NUCLEOTIDE SEQUENCE [LARGE SCALE MRNA] (ISOFORMS 1 AND 3)</scope>
    <source>
        <tissue>Brain</tissue>
    </source>
</reference>
<reference key="4">
    <citation type="journal article" date="2007" name="BMC Genomics">
        <title>The full-ORF clone resource of the German cDNA consortium.</title>
        <authorList>
            <person name="Bechtel S."/>
            <person name="Rosenfelder H."/>
            <person name="Duda A."/>
            <person name="Schmidt C.P."/>
            <person name="Ernst U."/>
            <person name="Wellenreuther R."/>
            <person name="Mehrle A."/>
            <person name="Schuster C."/>
            <person name="Bahr A."/>
            <person name="Bloecker H."/>
            <person name="Heubner D."/>
            <person name="Hoerlein A."/>
            <person name="Michel G."/>
            <person name="Wedler H."/>
            <person name="Koehrer K."/>
            <person name="Ottenwaelder B."/>
            <person name="Poustka A."/>
            <person name="Wiemann S."/>
            <person name="Schupp I."/>
        </authorList>
    </citation>
    <scope>NUCLEOTIDE SEQUENCE [LARGE SCALE MRNA] OF 1-355 (ISOFORM 2)</scope>
    <source>
        <tissue>Testis</tissue>
    </source>
</reference>
<reference key="5">
    <citation type="journal article" date="2011" name="Protein Cell">
        <title>HID-1 is a peripheral membrane protein primarily associated with the medial- and trans- Golgi apparatus.</title>
        <authorList>
            <person name="Wang L."/>
            <person name="Zhan Y."/>
            <person name="Song E."/>
            <person name="Yu Y."/>
            <person name="Jiu Y."/>
            <person name="Du W."/>
            <person name="Lu J."/>
            <person name="Liu P."/>
            <person name="Xu P."/>
            <person name="Xu T."/>
        </authorList>
    </citation>
    <scope>SUBCELLULAR LOCATION</scope>
    <scope>TISSUE SPECIFICITY</scope>
    <scope>MYRISTOYLATION AT GLY-2</scope>
</reference>
<reference key="6">
    <citation type="journal article" date="2011" name="Sci. Signal.">
        <title>System-wide temporal characterization of the proteome and phosphoproteome of human embryonic stem cell differentiation.</title>
        <authorList>
            <person name="Rigbolt K.T."/>
            <person name="Prokhorova T.A."/>
            <person name="Akimov V."/>
            <person name="Henningsen J."/>
            <person name="Johansen P.T."/>
            <person name="Kratchmarova I."/>
            <person name="Kassem M."/>
            <person name="Mann M."/>
            <person name="Olsen J.V."/>
            <person name="Blagoev B."/>
        </authorList>
    </citation>
    <scope>PHOSPHORYLATION [LARGE SCALE ANALYSIS] AT SER-653</scope>
    <scope>IDENTIFICATION BY MASS SPECTROMETRY [LARGE SCALE ANALYSIS]</scope>
</reference>
<reference key="7">
    <citation type="journal article" date="2014" name="Anal. Biochem.">
        <title>Cell-free identification of novel N-myristoylated proteins from complementary DNA resources using bioorthogonal myristic acid analogues.</title>
        <authorList>
            <person name="Takamitsu E."/>
            <person name="Fukunaga K."/>
            <person name="Iio Y."/>
            <person name="Moriya K."/>
            <person name="Utsumi T."/>
        </authorList>
    </citation>
    <scope>MYRISTOYLATION AT GLY-2</scope>
</reference>
<reference key="8">
    <citation type="journal article" date="2021" name="Ann. Neurol.">
        <title>Mutations in HID1 Cause Syndromic Infantile Encephalopathy and Hypopituitarism.</title>
        <authorList>
            <person name="Schaenzer A."/>
            <person name="Achleitner M.T."/>
            <person name="Truembach D."/>
            <person name="Hubert L."/>
            <person name="Munnich A."/>
            <person name="Ahlemeyer B."/>
            <person name="AlAbdulrahim M.M."/>
            <person name="Greif P.A."/>
            <person name="Vosberg S."/>
            <person name="Hummer B."/>
            <person name="Feichtinger R.G."/>
            <person name="Mayr J.A."/>
            <person name="Wortmann S.B."/>
            <person name="Aichner H."/>
            <person name="Rudnik-Schoeneborn S."/>
            <person name="Ruiz A."/>
            <person name="Gabau E."/>
            <person name="Sanchez J.P."/>
            <person name="Ellard S."/>
            <person name="Homfray T."/>
            <person name="Stals K.L."/>
            <person name="Wurst W."/>
            <person name="Neubauer B.A."/>
            <person name="Acker T."/>
            <person name="Bohlander S.K."/>
            <person name="Asensio C."/>
            <person name="Besmond C."/>
            <person name="Alkuraya F.S."/>
            <person name="AlSayed M.D."/>
            <person name="Hahn A."/>
            <person name="Weber A."/>
        </authorList>
    </citation>
    <scope>INVOLVEMENT IN DEE105</scope>
    <scope>VARIANTS DEE105 130-GLN--VAL-788 DEL; ASP-187; TRP-433 AND PRO-533</scope>
    <scope>CHARACTERIZATION OF VARIANT DEE105 TRP-433</scope>
    <scope>TISSUE SPECIFICITY</scope>
</reference>
<organism>
    <name type="scientific">Homo sapiens</name>
    <name type="common">Human</name>
    <dbReference type="NCBI Taxonomy" id="9606"/>
    <lineage>
        <taxon>Eukaryota</taxon>
        <taxon>Metazoa</taxon>
        <taxon>Chordata</taxon>
        <taxon>Craniata</taxon>
        <taxon>Vertebrata</taxon>
        <taxon>Euteleostomi</taxon>
        <taxon>Mammalia</taxon>
        <taxon>Eutheria</taxon>
        <taxon>Euarchontoglires</taxon>
        <taxon>Primates</taxon>
        <taxon>Haplorrhini</taxon>
        <taxon>Catarrhini</taxon>
        <taxon>Hominidae</taxon>
        <taxon>Homo</taxon>
    </lineage>
</organism>
<protein>
    <recommendedName>
        <fullName>Protein HID1</fullName>
    </recommendedName>
    <alternativeName>
        <fullName>Down-regulated in multiple cancers 1</fullName>
    </alternativeName>
    <alternativeName>
        <fullName>HID1 domain-containing protein</fullName>
    </alternativeName>
    <alternativeName>
        <fullName>Protein hid-1 homolog</fullName>
    </alternativeName>
</protein>
<name>HID1_HUMAN</name>
<keyword id="KW-0025">Alternative splicing</keyword>
<keyword id="KW-0963">Cytoplasm</keyword>
<keyword id="KW-0225">Disease variant</keyword>
<keyword id="KW-0887">Epilepsy</keyword>
<keyword id="KW-0333">Golgi apparatus</keyword>
<keyword id="KW-0991">Intellectual disability</keyword>
<keyword id="KW-0449">Lipoprotein</keyword>
<keyword id="KW-0472">Membrane</keyword>
<keyword id="KW-0519">Myristate</keyword>
<keyword id="KW-0597">Phosphoprotein</keyword>
<keyword id="KW-1267">Proteomics identification</keyword>
<keyword id="KW-1185">Reference proteome</keyword>
<sequence>MGSTDSKLNFRKAVIQLTTKTQPVEATDDAFWDQFWADTATSVQDVFALVPAAEIRAVREESPSNLATLCYKAVEKLVQGAESGCHSEKEKQIVLNCSRLLTRVLPYIFEDPDWRGFFWSTVPGAGRGGQGEEDDEHARPLAESLLLAIADLLFCPDFTVQSHRRSTVDSAEDVHSLDSCEYIWEAGVGFAHSPQPNYIHDMNRMELLKLLLTCFSEAMYLPPAPESGSTNPWVQFFCSTENRHALPLFTSLLNTVCAYDPVGYGIPYNHLLFSDYREPLVEEAAQVLIVTLDHDSASSASPTVDGTTTGTAMDDADPPGPENLFVNYLSRIHREEDFQFILKGIARLLSNPLLQTYLPNSTKKIQFHQELLVLFWKLCDFNKKFLFFVLKSSDVLDILVPILFFLNDARADQSRVGLMHIGVFILLLLSGERNFGVRLNKPYSIRVPMDIPVFTGTHADLLIVVFHKIITSGHQRLQPLFDCLLTIVVNVSPYLKSLSMVTANKLLHLLEAFSTTWFLFSAAQNHHLVFFLLEVFNNIIQYQFDGNSNLVYAIIRKRSIFHQLANLPTDPPTIHKALQRRRRTPEPLSRTGSQEGTSMEGSRPAAPAEPGTLKTSLVATPGIDKLTEKSQVSEDGTLRSLEPEPQQSLEDGSPAKGEPSQAWREQRRPSTSSASGQWSPTPEWVLSWKSKLPLQTIMRLLQVLVPQVEKICIDKGLTDESEILRFLQHGTLVGLLPVPHPILIRKYQANSGTAMWFRTYMWGVIYLRNVDPPVWYDTDVKLFEIQRV</sequence>
<gene>
    <name type="primary">HID1</name>
    <name type="synonym">C17orf28</name>
    <name type="synonym">DMC1</name>
</gene>
<comment type="function">
    <text evidence="3">May play an important role in the development of cancers in a broad range of tissues.</text>
</comment>
<comment type="interaction">
    <interactant intactId="EBI-743438">
        <id>Q8IV36</id>
    </interactant>
    <interactant intactId="EBI-12258670">
        <id>Q5SZQ8-2</id>
        <label>CELF3</label>
    </interactant>
    <organismsDiffer>false</organismsDiffer>
    <experiments>3</experiments>
</comment>
<comment type="interaction">
    <interactant intactId="EBI-743438">
        <id>Q8IV36</id>
    </interactant>
    <interactant intactId="EBI-25837549">
        <id>P28329-3</id>
        <label>CHAT</label>
    </interactant>
    <organismsDiffer>false</organismsDiffer>
    <experiments>3</experiments>
</comment>
<comment type="interaction">
    <interactant intactId="EBI-743438">
        <id>Q8IV36</id>
    </interactant>
    <interactant intactId="EBI-719186">
        <id>O75534</id>
        <label>CSDE1</label>
    </interactant>
    <organismsDiffer>false</organismsDiffer>
    <experiments>3</experiments>
</comment>
<comment type="interaction">
    <interactant intactId="EBI-743438">
        <id>Q8IV36</id>
    </interactant>
    <interactant intactId="EBI-12397458">
        <id>O75534-3</id>
        <label>CSDE1</label>
    </interactant>
    <organismsDiffer>false</organismsDiffer>
    <experiments>3</experiments>
</comment>
<comment type="interaction">
    <interactant intactId="EBI-743438">
        <id>Q8IV36</id>
    </interactant>
    <interactant intactId="EBI-2339219">
        <id>Q08426</id>
        <label>EHHADH</label>
    </interactant>
    <organismsDiffer>false</organismsDiffer>
    <experiments>3</experiments>
</comment>
<comment type="interaction">
    <interactant intactId="EBI-743438">
        <id>Q8IV36</id>
    </interactant>
    <interactant intactId="EBI-348399">
        <id>P22607</id>
        <label>FGFR3</label>
    </interactant>
    <organismsDiffer>false</organismsDiffer>
    <experiments>3</experiments>
</comment>
<comment type="interaction">
    <interactant intactId="EBI-743438">
        <id>Q8IV36</id>
    </interactant>
    <interactant intactId="EBI-350145">
        <id>P01112</id>
        <label>HRAS</label>
    </interactant>
    <organismsDiffer>false</organismsDiffer>
    <experiments>3</experiments>
</comment>
<comment type="interaction">
    <interactant intactId="EBI-743438">
        <id>Q8IV36</id>
    </interactant>
    <interactant intactId="EBI-1384248">
        <id>O15357</id>
        <label>INPPL1</label>
    </interactant>
    <organismsDiffer>false</organismsDiffer>
    <experiments>2</experiments>
</comment>
<comment type="interaction">
    <interactant intactId="EBI-743438">
        <id>Q8IV36</id>
    </interactant>
    <interactant intactId="EBI-5235340">
        <id>Q7Z699</id>
        <label>SPRED1</label>
    </interactant>
    <organismsDiffer>false</organismsDiffer>
    <experiments>3</experiments>
</comment>
<comment type="interaction">
    <interactant intactId="EBI-743438">
        <id>Q8IV36</id>
    </interactant>
    <interactant intactId="EBI-12806590">
        <id>Q86WV8</id>
        <label>TSC1</label>
    </interactant>
    <organismsDiffer>false</organismsDiffer>
    <experiments>3</experiments>
</comment>
<comment type="interaction">
    <interactant intactId="EBI-743438">
        <id>Q8IV36</id>
    </interactant>
    <interactant intactId="EBI-607755">
        <id>Q9BZL1</id>
        <label>UBL5</label>
    </interactant>
    <organismsDiffer>false</organismsDiffer>
    <experiments>3</experiments>
</comment>
<comment type="interaction">
    <interactant intactId="EBI-743438">
        <id>Q8IV36</id>
    </interactant>
    <interactant intactId="EBI-741480">
        <id>Q9UMX0</id>
        <label>UBQLN1</label>
    </interactant>
    <organismsDiffer>false</organismsDiffer>
    <experiments>3</experiments>
</comment>
<comment type="subcellular location">
    <subcellularLocation>
        <location evidence="4">Cytoplasm</location>
    </subcellularLocation>
    <subcellularLocation>
        <location evidence="4">Golgi apparatus membrane</location>
        <topology evidence="4">Lipid-anchor</topology>
    </subcellularLocation>
    <text>Shuttles between the cytosol and the Golgi apparatus.</text>
</comment>
<comment type="alternative products">
    <event type="alternative splicing"/>
    <isoform>
        <id>Q8IV36-1</id>
        <name>1</name>
        <sequence type="displayed"/>
    </isoform>
    <isoform>
        <id>Q8IV36-2</id>
        <name>2</name>
        <sequence type="described" ref="VSP_014473"/>
    </isoform>
    <isoform>
        <id>Q8IV36-3</id>
        <name>3</name>
        <sequence type="described" ref="VSP_014472"/>
    </isoform>
</comment>
<comment type="tissue specificity">
    <text evidence="3 4 6">Expressed in heart, skeletal muscle, colon, spleen, kidney, liver, small intestine and lung. Highest expression is seen in brain and placenta. Loss of expression is seen in some breast, cervical, hepatocellular, lung, thyroid, gastric and renal cell-cancer lines. Highly expressed in secretory cell lines. Expressed in almost all regions of the brain, in cerebellum, anterior frontal cortex, and striatum.</text>
</comment>
<comment type="disease" evidence="6">
    <disease id="DI-06474">
        <name>Developmental and epileptic encephalopathy 105 with hypopituitarism</name>
        <acronym>DEE105</acronym>
        <description>A form of epileptic encephalopathy, a heterogeneous group of early-onset epilepsies characterized by refractory seizures, neurodevelopmental impairment, and poor prognosis. Development is normal prior to seizure onset, after which cognitive and motor delays become apparent. DEE105 is an autosomal recessive form characterized by onset of seizures in the first weeks or months of life. Affected individuals have hypopituitarism in association with profoundly impaired development with almost no acquisition of skills, brain atrophy, thin corpus callosum, and small pituitary gland.</description>
        <dbReference type="MIM" id="619983"/>
    </disease>
    <text>The disease is caused by variants affecting the gene represented in this entry.</text>
</comment>
<comment type="similarity">
    <text evidence="9">Belongs to the hid-1 family.</text>
</comment>
<comment type="sequence caution" evidence="9">
    <conflict type="frameshift">
        <sequence resource="EMBL-CDS" id="BAB85070"/>
    </conflict>
</comment>